<feature type="chain" id="PRO_1000045742" description="Protein SlyX">
    <location>
        <begin position="1"/>
        <end position="72"/>
    </location>
</feature>
<feature type="region of interest" description="Disordered" evidence="2">
    <location>
        <begin position="52"/>
        <end position="72"/>
    </location>
</feature>
<feature type="compositionally biased region" description="Polar residues" evidence="2">
    <location>
        <begin position="55"/>
        <end position="65"/>
    </location>
</feature>
<name>SLYX_SHIF8</name>
<protein>
    <recommendedName>
        <fullName evidence="1">Protein SlyX</fullName>
    </recommendedName>
</protein>
<accession>Q0SZW9</accession>
<organism>
    <name type="scientific">Shigella flexneri serotype 5b (strain 8401)</name>
    <dbReference type="NCBI Taxonomy" id="373384"/>
    <lineage>
        <taxon>Bacteria</taxon>
        <taxon>Pseudomonadati</taxon>
        <taxon>Pseudomonadota</taxon>
        <taxon>Gammaproteobacteria</taxon>
        <taxon>Enterobacterales</taxon>
        <taxon>Enterobacteriaceae</taxon>
        <taxon>Shigella</taxon>
    </lineage>
</organism>
<evidence type="ECO:0000255" key="1">
    <source>
        <dbReference type="HAMAP-Rule" id="MF_00715"/>
    </source>
</evidence>
<evidence type="ECO:0000256" key="2">
    <source>
        <dbReference type="SAM" id="MobiDB-lite"/>
    </source>
</evidence>
<gene>
    <name evidence="1" type="primary">slyX</name>
    <name type="ordered locus">SFV_3353</name>
</gene>
<comment type="similarity">
    <text evidence="1">Belongs to the SlyX family.</text>
</comment>
<reference key="1">
    <citation type="journal article" date="2006" name="BMC Genomics">
        <title>Complete genome sequence of Shigella flexneri 5b and comparison with Shigella flexneri 2a.</title>
        <authorList>
            <person name="Nie H."/>
            <person name="Yang F."/>
            <person name="Zhang X."/>
            <person name="Yang J."/>
            <person name="Chen L."/>
            <person name="Wang J."/>
            <person name="Xiong Z."/>
            <person name="Peng J."/>
            <person name="Sun L."/>
            <person name="Dong J."/>
            <person name="Xue Y."/>
            <person name="Xu X."/>
            <person name="Chen S."/>
            <person name="Yao Z."/>
            <person name="Shen Y."/>
            <person name="Jin Q."/>
        </authorList>
    </citation>
    <scope>NUCLEOTIDE SEQUENCE [LARGE SCALE GENOMIC DNA]</scope>
    <source>
        <strain>8401</strain>
    </source>
</reference>
<dbReference type="EMBL" id="CP000266">
    <property type="protein sequence ID" value="ABF05396.1"/>
    <property type="molecule type" value="Genomic_DNA"/>
</dbReference>
<dbReference type="RefSeq" id="WP_001153615.1">
    <property type="nucleotide sequence ID" value="NC_008258.1"/>
</dbReference>
<dbReference type="SMR" id="Q0SZW9"/>
<dbReference type="KEGG" id="sfv:SFV_3353"/>
<dbReference type="HOGENOM" id="CLU_180796_4_2_6"/>
<dbReference type="Proteomes" id="UP000000659">
    <property type="component" value="Chromosome"/>
</dbReference>
<dbReference type="Gene3D" id="1.20.5.300">
    <property type="match status" value="1"/>
</dbReference>
<dbReference type="HAMAP" id="MF_00715">
    <property type="entry name" value="SlyX"/>
    <property type="match status" value="1"/>
</dbReference>
<dbReference type="InterPro" id="IPR007236">
    <property type="entry name" value="SlyX"/>
</dbReference>
<dbReference type="NCBIfam" id="NF002750">
    <property type="entry name" value="PRK02793.1"/>
    <property type="match status" value="1"/>
</dbReference>
<dbReference type="PANTHER" id="PTHR36508">
    <property type="entry name" value="PROTEIN SLYX"/>
    <property type="match status" value="1"/>
</dbReference>
<dbReference type="PANTHER" id="PTHR36508:SF1">
    <property type="entry name" value="PROTEIN SLYX"/>
    <property type="match status" value="1"/>
</dbReference>
<dbReference type="Pfam" id="PF04102">
    <property type="entry name" value="SlyX"/>
    <property type="match status" value="1"/>
</dbReference>
<sequence>MQDLSLEARLAELESRLAFQEITIEELNVTVTAHEMEMAKLRDHLRLLTEKLKASQPSNIASQAEETPPPHY</sequence>
<proteinExistence type="inferred from homology"/>